<feature type="chain" id="PRO_1000023832" description="Hydrogenase maturation factor HypA">
    <location>
        <begin position="1"/>
        <end position="113"/>
    </location>
</feature>
<feature type="binding site" evidence="1">
    <location>
        <position position="2"/>
    </location>
    <ligand>
        <name>Ni(2+)</name>
        <dbReference type="ChEBI" id="CHEBI:49786"/>
    </ligand>
</feature>
<feature type="binding site" evidence="1">
    <location>
        <position position="73"/>
    </location>
    <ligand>
        <name>Zn(2+)</name>
        <dbReference type="ChEBI" id="CHEBI:29105"/>
    </ligand>
</feature>
<feature type="binding site" evidence="1">
    <location>
        <position position="76"/>
    </location>
    <ligand>
        <name>Zn(2+)</name>
        <dbReference type="ChEBI" id="CHEBI:29105"/>
    </ligand>
</feature>
<feature type="binding site" evidence="1">
    <location>
        <position position="89"/>
    </location>
    <ligand>
        <name>Zn(2+)</name>
        <dbReference type="ChEBI" id="CHEBI:29105"/>
    </ligand>
</feature>
<feature type="binding site" evidence="1">
    <location>
        <position position="92"/>
    </location>
    <ligand>
        <name>Zn(2+)</name>
        <dbReference type="ChEBI" id="CHEBI:29105"/>
    </ligand>
</feature>
<comment type="function">
    <text evidence="1">Involved in the maturation of [NiFe] hydrogenases. Required for nickel insertion into the metal center of the hydrogenase.</text>
</comment>
<comment type="similarity">
    <text evidence="1">Belongs to the HypA/HybF family.</text>
</comment>
<dbReference type="EMBL" id="CR628336">
    <property type="protein sequence ID" value="CAH13694.1"/>
    <property type="molecule type" value="Genomic_DNA"/>
</dbReference>
<dbReference type="RefSeq" id="WP_011947391.1">
    <property type="nucleotide sequence ID" value="NC_006368.1"/>
</dbReference>
<dbReference type="SMR" id="Q5X252"/>
<dbReference type="KEGG" id="lpp:lpp2541"/>
<dbReference type="LegioList" id="lpp2541"/>
<dbReference type="HOGENOM" id="CLU_126929_3_0_6"/>
<dbReference type="GO" id="GO:0016151">
    <property type="term" value="F:nickel cation binding"/>
    <property type="evidence" value="ECO:0007669"/>
    <property type="project" value="UniProtKB-UniRule"/>
</dbReference>
<dbReference type="GO" id="GO:0008270">
    <property type="term" value="F:zinc ion binding"/>
    <property type="evidence" value="ECO:0007669"/>
    <property type="project" value="UniProtKB-UniRule"/>
</dbReference>
<dbReference type="GO" id="GO:0051604">
    <property type="term" value="P:protein maturation"/>
    <property type="evidence" value="ECO:0007669"/>
    <property type="project" value="InterPro"/>
</dbReference>
<dbReference type="GO" id="GO:0036211">
    <property type="term" value="P:protein modification process"/>
    <property type="evidence" value="ECO:0007669"/>
    <property type="project" value="UniProtKB-UniRule"/>
</dbReference>
<dbReference type="Gene3D" id="3.30.2320.80">
    <property type="match status" value="1"/>
</dbReference>
<dbReference type="HAMAP" id="MF_00213">
    <property type="entry name" value="HypA_HybF"/>
    <property type="match status" value="1"/>
</dbReference>
<dbReference type="InterPro" id="IPR020538">
    <property type="entry name" value="Hydgase_Ni_incorp_HypA/HybF_CS"/>
</dbReference>
<dbReference type="InterPro" id="IPR000688">
    <property type="entry name" value="HypA/HybF"/>
</dbReference>
<dbReference type="NCBIfam" id="TIGR00100">
    <property type="entry name" value="hypA"/>
    <property type="match status" value="1"/>
</dbReference>
<dbReference type="PANTHER" id="PTHR34535">
    <property type="entry name" value="HYDROGENASE MATURATION FACTOR HYPA"/>
    <property type="match status" value="1"/>
</dbReference>
<dbReference type="PANTHER" id="PTHR34535:SF3">
    <property type="entry name" value="HYDROGENASE MATURATION FACTOR HYPA"/>
    <property type="match status" value="1"/>
</dbReference>
<dbReference type="Pfam" id="PF01155">
    <property type="entry name" value="HypA"/>
    <property type="match status" value="1"/>
</dbReference>
<dbReference type="PIRSF" id="PIRSF004761">
    <property type="entry name" value="Hydrgn_mat_HypA"/>
    <property type="match status" value="1"/>
</dbReference>
<dbReference type="PROSITE" id="PS01249">
    <property type="entry name" value="HYPA"/>
    <property type="match status" value="1"/>
</dbReference>
<evidence type="ECO:0000255" key="1">
    <source>
        <dbReference type="HAMAP-Rule" id="MF_00213"/>
    </source>
</evidence>
<sequence length="113" mass="12689">MHELWLCKRIVEIIKQQATGNKCRMVKKIVLEIGQLVAVDKHALNFSFKVITQGTIAQNAELSIVEIPGEAICNSCQQIVPMKQYYDECLVCGNHSLTLTKGEELKVKSMVVE</sequence>
<proteinExistence type="inferred from homology"/>
<gene>
    <name evidence="1" type="primary">hypA</name>
    <name type="ordered locus">lpp2541</name>
</gene>
<keyword id="KW-0479">Metal-binding</keyword>
<keyword id="KW-0533">Nickel</keyword>
<keyword id="KW-0862">Zinc</keyword>
<reference key="1">
    <citation type="journal article" date="2004" name="Nat. Genet.">
        <title>Evidence in the Legionella pneumophila genome for exploitation of host cell functions and high genome plasticity.</title>
        <authorList>
            <person name="Cazalet C."/>
            <person name="Rusniok C."/>
            <person name="Brueggemann H."/>
            <person name="Zidane N."/>
            <person name="Magnier A."/>
            <person name="Ma L."/>
            <person name="Tichit M."/>
            <person name="Jarraud S."/>
            <person name="Bouchier C."/>
            <person name="Vandenesch F."/>
            <person name="Kunst F."/>
            <person name="Etienne J."/>
            <person name="Glaser P."/>
            <person name="Buchrieser C."/>
        </authorList>
    </citation>
    <scope>NUCLEOTIDE SEQUENCE [LARGE SCALE GENOMIC DNA]</scope>
    <source>
        <strain>Paris</strain>
    </source>
</reference>
<name>HYPA_LEGPA</name>
<accession>Q5X252</accession>
<protein>
    <recommendedName>
        <fullName evidence="1">Hydrogenase maturation factor HypA</fullName>
    </recommendedName>
</protein>
<organism>
    <name type="scientific">Legionella pneumophila (strain Paris)</name>
    <dbReference type="NCBI Taxonomy" id="297246"/>
    <lineage>
        <taxon>Bacteria</taxon>
        <taxon>Pseudomonadati</taxon>
        <taxon>Pseudomonadota</taxon>
        <taxon>Gammaproteobacteria</taxon>
        <taxon>Legionellales</taxon>
        <taxon>Legionellaceae</taxon>
        <taxon>Legionella</taxon>
    </lineage>
</organism>